<reference key="1">
    <citation type="journal article" date="2006" name="BMC Genomics">
        <title>Complete plastid genome sequence of Daucus carota: implications for biotechnology and phylogeny of angiosperms.</title>
        <authorList>
            <person name="Ruhlman T."/>
            <person name="Lee S.-B."/>
            <person name="Jansen R.K."/>
            <person name="Hostetler J.B."/>
            <person name="Tallon L.J."/>
            <person name="Town C.D."/>
            <person name="Daniell H."/>
        </authorList>
    </citation>
    <scope>NUCLEOTIDE SEQUENCE [LARGE SCALE GENOMIC DNA]</scope>
    <source>
        <strain>cv. Danvers Half-long</strain>
    </source>
</reference>
<evidence type="ECO:0000250" key="1"/>
<evidence type="ECO:0000256" key="2">
    <source>
        <dbReference type="SAM" id="MobiDB-lite"/>
    </source>
</evidence>
<evidence type="ECO:0000305" key="3"/>
<name>RR4_DAUCA</name>
<feature type="chain" id="PRO_0000277008" description="Small ribosomal subunit protein uS4c">
    <location>
        <begin position="1"/>
        <end position="201"/>
    </location>
</feature>
<feature type="domain" description="S4 RNA-binding">
    <location>
        <begin position="89"/>
        <end position="149"/>
    </location>
</feature>
<feature type="region of interest" description="Disordered" evidence="2">
    <location>
        <begin position="15"/>
        <end position="44"/>
    </location>
</feature>
<sequence>MSRYRGPRFKKIRRLGALPGLTNKRPRAGSDLRNQSRSGKKSQYRIRLEEKQKLRFHYGLTERQLLKYVRIAGKAKGSTGQVLLQLLEMRLDNILFRLGMATTIPGARQLVNHRHILVNGRIVDIPSYRCKPRDIITARDEQNSRALIQNSFNSPSQDEMPKHLTLQPFQYKGLVNQIIDSKWVGLKINELLVVEYYSRQT</sequence>
<gene>
    <name type="primary">rps4</name>
</gene>
<organism>
    <name type="scientific">Daucus carota</name>
    <name type="common">Wild carrot</name>
    <dbReference type="NCBI Taxonomy" id="4039"/>
    <lineage>
        <taxon>Eukaryota</taxon>
        <taxon>Viridiplantae</taxon>
        <taxon>Streptophyta</taxon>
        <taxon>Embryophyta</taxon>
        <taxon>Tracheophyta</taxon>
        <taxon>Spermatophyta</taxon>
        <taxon>Magnoliopsida</taxon>
        <taxon>eudicotyledons</taxon>
        <taxon>Gunneridae</taxon>
        <taxon>Pentapetalae</taxon>
        <taxon>asterids</taxon>
        <taxon>campanulids</taxon>
        <taxon>Apiales</taxon>
        <taxon>Apiaceae</taxon>
        <taxon>Apioideae</taxon>
        <taxon>Scandiceae</taxon>
        <taxon>Daucinae</taxon>
        <taxon>Daucus</taxon>
        <taxon>Daucus sect. Daucus</taxon>
    </lineage>
</organism>
<proteinExistence type="inferred from homology"/>
<geneLocation type="chloroplast"/>
<protein>
    <recommendedName>
        <fullName evidence="3">Small ribosomal subunit protein uS4c</fullName>
    </recommendedName>
    <alternativeName>
        <fullName>30S ribosomal protein S4, chloroplastic</fullName>
    </alternativeName>
</protein>
<dbReference type="EMBL" id="DQ898156">
    <property type="protein sequence ID" value="ABI32426.1"/>
    <property type="molecule type" value="Genomic_DNA"/>
</dbReference>
<dbReference type="RefSeq" id="YP_740119.1">
    <property type="nucleotide sequence ID" value="NC_008325.1"/>
</dbReference>
<dbReference type="SMR" id="Q0G9W0"/>
<dbReference type="GeneID" id="4266738"/>
<dbReference type="OMA" id="QLVVELY"/>
<dbReference type="GO" id="GO:0009507">
    <property type="term" value="C:chloroplast"/>
    <property type="evidence" value="ECO:0007669"/>
    <property type="project" value="UniProtKB-SubCell"/>
</dbReference>
<dbReference type="GO" id="GO:0015935">
    <property type="term" value="C:small ribosomal subunit"/>
    <property type="evidence" value="ECO:0007669"/>
    <property type="project" value="InterPro"/>
</dbReference>
<dbReference type="GO" id="GO:0019843">
    <property type="term" value="F:rRNA binding"/>
    <property type="evidence" value="ECO:0007669"/>
    <property type="project" value="UniProtKB-UniRule"/>
</dbReference>
<dbReference type="GO" id="GO:0003735">
    <property type="term" value="F:structural constituent of ribosome"/>
    <property type="evidence" value="ECO:0007669"/>
    <property type="project" value="InterPro"/>
</dbReference>
<dbReference type="GO" id="GO:0042274">
    <property type="term" value="P:ribosomal small subunit biogenesis"/>
    <property type="evidence" value="ECO:0007669"/>
    <property type="project" value="TreeGrafter"/>
</dbReference>
<dbReference type="GO" id="GO:0006412">
    <property type="term" value="P:translation"/>
    <property type="evidence" value="ECO:0007669"/>
    <property type="project" value="UniProtKB-UniRule"/>
</dbReference>
<dbReference type="CDD" id="cd00165">
    <property type="entry name" value="S4"/>
    <property type="match status" value="1"/>
</dbReference>
<dbReference type="FunFam" id="1.10.1050.10:FF:000002">
    <property type="entry name" value="30S ribosomal protein S4, chloroplastic"/>
    <property type="match status" value="1"/>
</dbReference>
<dbReference type="FunFam" id="3.10.290.10:FF:000081">
    <property type="entry name" value="30S ribosomal protein S4, chloroplastic"/>
    <property type="match status" value="1"/>
</dbReference>
<dbReference type="Gene3D" id="1.10.1050.10">
    <property type="entry name" value="Ribosomal Protein S4 Delta 41, Chain A, domain 1"/>
    <property type="match status" value="1"/>
</dbReference>
<dbReference type="Gene3D" id="3.10.290.10">
    <property type="entry name" value="RNA-binding S4 domain"/>
    <property type="match status" value="1"/>
</dbReference>
<dbReference type="HAMAP" id="MF_01306_B">
    <property type="entry name" value="Ribosomal_uS4_B"/>
    <property type="match status" value="1"/>
</dbReference>
<dbReference type="InterPro" id="IPR022801">
    <property type="entry name" value="Ribosomal_uS4"/>
</dbReference>
<dbReference type="InterPro" id="IPR005709">
    <property type="entry name" value="Ribosomal_uS4_bac-type"/>
</dbReference>
<dbReference type="InterPro" id="IPR018079">
    <property type="entry name" value="Ribosomal_uS4_CS"/>
</dbReference>
<dbReference type="InterPro" id="IPR001912">
    <property type="entry name" value="Ribosomal_uS4_N"/>
</dbReference>
<dbReference type="InterPro" id="IPR002942">
    <property type="entry name" value="S4_RNA-bd"/>
</dbReference>
<dbReference type="InterPro" id="IPR036986">
    <property type="entry name" value="S4_RNA-bd_sf"/>
</dbReference>
<dbReference type="NCBIfam" id="NF003717">
    <property type="entry name" value="PRK05327.1"/>
    <property type="match status" value="1"/>
</dbReference>
<dbReference type="NCBIfam" id="TIGR01017">
    <property type="entry name" value="rpsD_bact"/>
    <property type="match status" value="1"/>
</dbReference>
<dbReference type="PANTHER" id="PTHR11831">
    <property type="entry name" value="30S 40S RIBOSOMAL PROTEIN"/>
    <property type="match status" value="1"/>
</dbReference>
<dbReference type="PANTHER" id="PTHR11831:SF4">
    <property type="entry name" value="SMALL RIBOSOMAL SUBUNIT PROTEIN US4M"/>
    <property type="match status" value="1"/>
</dbReference>
<dbReference type="Pfam" id="PF00163">
    <property type="entry name" value="Ribosomal_S4"/>
    <property type="match status" value="1"/>
</dbReference>
<dbReference type="Pfam" id="PF01479">
    <property type="entry name" value="S4"/>
    <property type="match status" value="1"/>
</dbReference>
<dbReference type="SMART" id="SM01390">
    <property type="entry name" value="Ribosomal_S4"/>
    <property type="match status" value="1"/>
</dbReference>
<dbReference type="SMART" id="SM00363">
    <property type="entry name" value="S4"/>
    <property type="match status" value="1"/>
</dbReference>
<dbReference type="SUPFAM" id="SSF55174">
    <property type="entry name" value="Alpha-L RNA-binding motif"/>
    <property type="match status" value="1"/>
</dbReference>
<dbReference type="PROSITE" id="PS00632">
    <property type="entry name" value="RIBOSOMAL_S4"/>
    <property type="match status" value="1"/>
</dbReference>
<dbReference type="PROSITE" id="PS50889">
    <property type="entry name" value="S4"/>
    <property type="match status" value="1"/>
</dbReference>
<comment type="function">
    <text evidence="1">One of the primary rRNA binding proteins, it binds directly to 16S rRNA where it nucleates assembly of the body of the 30S subunit.</text>
</comment>
<comment type="function">
    <text evidence="1">With S5 and S12 plays an important role in translational accuracy.</text>
</comment>
<comment type="subunit">
    <text evidence="1">Part of the 30S ribosomal subunit. Contacts protein S5. The interaction surface between S4 and S5 is involved in control of translational fidelity (By similarity).</text>
</comment>
<comment type="subcellular location">
    <subcellularLocation>
        <location>Plastid</location>
        <location>Chloroplast</location>
    </subcellularLocation>
</comment>
<comment type="similarity">
    <text evidence="3">Belongs to the universal ribosomal protein uS4 family.</text>
</comment>
<keyword id="KW-0150">Chloroplast</keyword>
<keyword id="KW-0934">Plastid</keyword>
<keyword id="KW-0687">Ribonucleoprotein</keyword>
<keyword id="KW-0689">Ribosomal protein</keyword>
<keyword id="KW-0694">RNA-binding</keyword>
<keyword id="KW-0699">rRNA-binding</keyword>
<accession>Q0G9W0</accession>